<keyword id="KW-0002">3D-structure</keyword>
<keyword id="KW-0963">Cytoplasm</keyword>
<keyword id="KW-0968">Cytoplasmic vesicle</keyword>
<keyword id="KW-0903">Direct protein sequencing</keyword>
<keyword id="KW-0408">Iron</keyword>
<keyword id="KW-0409">Iron storage</keyword>
<keyword id="KW-0458">Lysosome</keyword>
<keyword id="KW-0479">Metal-binding</keyword>
<keyword id="KW-1185">Reference proteome</keyword>
<accession>P29391</accession>
<accession>Q8WUQ8</accession>
<reference key="1">
    <citation type="journal article" date="1989" name="J. Biol. Chem.">
        <title>Transcriptional regulation of ferritin H and L subunits in adult erythroid and liver cells from the mouse. Unambiguous identification of mouse ferritin subunits and in vitro formation of the ferritin shells.</title>
        <authorList>
            <person name="Beaumont C."/>
            <person name="Dugast I."/>
            <person name="Renaudie F."/>
            <person name="Souroujon M."/>
            <person name="Grandchamp B."/>
        </authorList>
    </citation>
    <scope>NUCLEOTIDE SEQUENCE [MRNA]</scope>
</reference>
<reference key="2">
    <citation type="journal article" date="1995" name="C. R. Acad. Sci. III, Sci. Vie">
        <title>Cloning, characterization and expression of mouse ferritin L subunit gene.</title>
        <authorList>
            <person name="Renaudie F."/>
            <person name="Boulanger L."/>
            <person name="Grandchamp B."/>
            <person name="Beaumont C."/>
        </authorList>
    </citation>
    <scope>NUCLEOTIDE SEQUENCE</scope>
</reference>
<reference key="3">
    <citation type="journal article" date="2004" name="Genome Res.">
        <title>The status, quality, and expansion of the NIH full-length cDNA project: the Mammalian Gene Collection (MGC).</title>
        <authorList>
            <consortium name="The MGC Project Team"/>
        </authorList>
    </citation>
    <scope>NUCLEOTIDE SEQUENCE [LARGE SCALE MRNA]</scope>
    <source>
        <tissue>Liver</tissue>
    </source>
</reference>
<reference key="4">
    <citation type="submission" date="2007-03" db="UniProtKB">
        <authorList>
            <person name="Lubec G."/>
            <person name="Klug S."/>
        </authorList>
    </citation>
    <scope>PROTEIN SEQUENCE OF 106-121 AND 155-177</scope>
    <scope>IDENTIFICATION BY MASS SPECTROMETRY</scope>
    <source>
        <tissue>Hippocampus</tissue>
    </source>
</reference>
<reference key="5">
    <citation type="journal article" date="2009" name="Dev. Cell">
        <title>Scara5 is a ferritin receptor mediating non-transferrin iron delivery.</title>
        <authorList>
            <person name="Li J.Y."/>
            <person name="Paragas N."/>
            <person name="Ned R.M."/>
            <person name="Qiu A."/>
            <person name="Viltard M."/>
            <person name="Leete T."/>
            <person name="Drexler I.R."/>
            <person name="Chen X."/>
            <person name="Sanna-Cherchi S."/>
            <person name="Mohammed F."/>
            <person name="Williams D."/>
            <person name="Lin C.S."/>
            <person name="Schmidt-Ott K.M."/>
            <person name="Andrews N.C."/>
            <person name="Barasch J."/>
        </authorList>
    </citation>
    <scope>FUNCTION</scope>
</reference>
<reference key="6">
    <citation type="journal article" date="2010" name="Cell">
        <title>A tissue-specific atlas of mouse protein phosphorylation and expression.</title>
        <authorList>
            <person name="Huttlin E.L."/>
            <person name="Jedrychowski M.P."/>
            <person name="Elias J.E."/>
            <person name="Goswami T."/>
            <person name="Rad R."/>
            <person name="Beausoleil S.A."/>
            <person name="Villen J."/>
            <person name="Haas W."/>
            <person name="Sowa M.E."/>
            <person name="Gygi S.P."/>
        </authorList>
    </citation>
    <scope>IDENTIFICATION BY MASS SPECTROMETRY [LARGE SCALE ANALYSIS]</scope>
    <source>
        <tissue>Brain</tissue>
        <tissue>Brown adipose tissue</tissue>
        <tissue>Heart</tissue>
        <tissue>Kidney</tissue>
        <tissue>Liver</tissue>
        <tissue>Lung</tissue>
        <tissue>Pancreas</tissue>
        <tissue>Spleen</tissue>
        <tissue>Testis</tissue>
    </source>
</reference>
<reference key="7">
    <citation type="journal article" date="2014" name="Nat. Cell Biol.">
        <title>Selective VPS34 inhibitor blocks autophagy and uncovers a role for NCOA4 in ferritin degradation and iron homeostasis in vivo.</title>
        <authorList>
            <person name="Dowdle W.E."/>
            <person name="Nyfeler B."/>
            <person name="Nagel J."/>
            <person name="Elling R.A."/>
            <person name="Liu S."/>
            <person name="Triantafellow E."/>
            <person name="Menon S."/>
            <person name="Wang Z."/>
            <person name="Honda A."/>
            <person name="Pardee G."/>
            <person name="Cantwell J."/>
            <person name="Luu C."/>
            <person name="Cornella-Taracido I."/>
            <person name="Harrington E."/>
            <person name="Fekkes P."/>
            <person name="Lei H."/>
            <person name="Fang Q."/>
            <person name="Digan M.E."/>
            <person name="Burdick D."/>
            <person name="Powers A.F."/>
            <person name="Helliwell S.B."/>
            <person name="D'Aquin S."/>
            <person name="Bastien J."/>
            <person name="Wang H."/>
            <person name="Wiederschain D."/>
            <person name="Kuerth J."/>
            <person name="Bergman P."/>
            <person name="Schwalb D."/>
            <person name="Thomas J."/>
            <person name="Ugwonali S."/>
            <person name="Harbinski F."/>
            <person name="Tallarico J."/>
            <person name="Wilson C.J."/>
            <person name="Myer V.E."/>
            <person name="Porter J.A."/>
            <person name="Bussiere D.E."/>
            <person name="Finan P.M."/>
            <person name="Labow M.A."/>
            <person name="Mao X."/>
            <person name="Hamann L.G."/>
            <person name="Manning B.D."/>
            <person name="Valdez R.A."/>
            <person name="Nicholson T."/>
            <person name="Schirle M."/>
            <person name="Knapp M.S."/>
            <person name="Keaney E.P."/>
            <person name="Murphy L.O."/>
        </authorList>
    </citation>
    <scope>FUNCTION</scope>
    <scope>INTERACTION WITH NCOA4</scope>
    <scope>SUBCELLULAR LOCATION</scope>
</reference>
<protein>
    <recommendedName>
        <fullName>Ferritin light chain 1</fullName>
    </recommendedName>
    <alternativeName>
        <fullName>Ferritin L subunit 1</fullName>
    </alternativeName>
</protein>
<proteinExistence type="evidence at protein level"/>
<feature type="chain" id="PRO_0000201061" description="Ferritin light chain 1">
    <location>
        <begin position="1"/>
        <end position="183"/>
    </location>
</feature>
<feature type="domain" description="Ferritin-like diiron" evidence="1">
    <location>
        <begin position="7"/>
        <end position="156"/>
    </location>
</feature>
<feature type="binding site" evidence="1">
    <location>
        <position position="54"/>
    </location>
    <ligand>
        <name>Fe cation</name>
        <dbReference type="ChEBI" id="CHEBI:24875"/>
    </ligand>
</feature>
<feature type="binding site" evidence="1">
    <location>
        <position position="57"/>
    </location>
    <ligand>
        <name>Fe cation</name>
        <dbReference type="ChEBI" id="CHEBI:24875"/>
    </ligand>
</feature>
<feature type="binding site" evidence="1">
    <location>
        <position position="58"/>
    </location>
    <ligand>
        <name>Fe cation</name>
        <dbReference type="ChEBI" id="CHEBI:24875"/>
    </ligand>
</feature>
<feature type="binding site" evidence="1">
    <location>
        <position position="61"/>
    </location>
    <ligand>
        <name>Fe cation</name>
        <dbReference type="ChEBI" id="CHEBI:24875"/>
    </ligand>
</feature>
<feature type="binding site" evidence="1">
    <location>
        <position position="64"/>
    </location>
    <ligand>
        <name>Fe cation</name>
        <dbReference type="ChEBI" id="CHEBI:24875"/>
    </ligand>
</feature>
<feature type="sequence conflict" description="In Ref. 3; AAH19840." evidence="4" ref="3">
    <original>L</original>
    <variation>V</variation>
    <location>
        <position position="25"/>
    </location>
</feature>
<feature type="sequence conflict" description="In Ref. 3; AAH19840." evidence="4" ref="3">
    <original>T</original>
    <variation>A</variation>
    <location>
        <position position="122"/>
    </location>
</feature>
<feature type="helix" evidence="5">
    <location>
        <begin position="11"/>
        <end position="38"/>
    </location>
</feature>
<feature type="turn" evidence="5">
    <location>
        <begin position="41"/>
        <end position="43"/>
    </location>
</feature>
<feature type="helix" evidence="5">
    <location>
        <begin position="46"/>
        <end position="73"/>
    </location>
</feature>
<feature type="helix" evidence="5">
    <location>
        <begin position="93"/>
        <end position="120"/>
    </location>
</feature>
<feature type="helix" evidence="5">
    <location>
        <begin position="124"/>
        <end position="133"/>
    </location>
</feature>
<feature type="helix" evidence="5">
    <location>
        <begin position="135"/>
        <end position="155"/>
    </location>
</feature>
<feature type="helix" evidence="5">
    <location>
        <begin position="170"/>
        <end position="178"/>
    </location>
</feature>
<feature type="helix" evidence="6">
    <location>
        <begin position="180"/>
        <end position="183"/>
    </location>
</feature>
<sequence>MTSQIRQNYSTEVEAAVNRLVNLHLRASYTYLSLGFFFDRDDVALEGVGHFFRELAEEKREGAERLLEFQNDRGGRALFQDVQKPSQDEWGKTQEAMEAALAMEKNLNQALLDLHALGSARTDPHLCDFLESHYLDKEVKLIKKMGNHLTNLRRVAGPQPAQTGAPQGSLGEYLFERLTLKHD</sequence>
<gene>
    <name type="primary">Ftl1</name>
    <name type="synonym">Ftl</name>
    <name type="synonym">Ftl-1</name>
</gene>
<organism>
    <name type="scientific">Mus musculus</name>
    <name type="common">Mouse</name>
    <dbReference type="NCBI Taxonomy" id="10090"/>
    <lineage>
        <taxon>Eukaryota</taxon>
        <taxon>Metazoa</taxon>
        <taxon>Chordata</taxon>
        <taxon>Craniata</taxon>
        <taxon>Vertebrata</taxon>
        <taxon>Euteleostomi</taxon>
        <taxon>Mammalia</taxon>
        <taxon>Eutheria</taxon>
        <taxon>Euarchontoglires</taxon>
        <taxon>Glires</taxon>
        <taxon>Rodentia</taxon>
        <taxon>Myomorpha</taxon>
        <taxon>Muroidea</taxon>
        <taxon>Muridae</taxon>
        <taxon>Murinae</taxon>
        <taxon>Mus</taxon>
        <taxon>Mus</taxon>
    </lineage>
</organism>
<name>FRIL1_MOUSE</name>
<dbReference type="EMBL" id="J04716">
    <property type="protein sequence ID" value="AAA37614.1"/>
    <property type="molecule type" value="mRNA"/>
</dbReference>
<dbReference type="EMBL" id="L39879">
    <property type="protein sequence ID" value="AAA62259.1"/>
    <property type="molecule type" value="Genomic_DNA"/>
</dbReference>
<dbReference type="EMBL" id="BC019840">
    <property type="protein sequence ID" value="AAH19840.1"/>
    <property type="molecule type" value="mRNA"/>
</dbReference>
<dbReference type="CCDS" id="CCDS39952.1"/>
<dbReference type="PIR" id="B33355">
    <property type="entry name" value="B33355"/>
</dbReference>
<dbReference type="PDB" id="1H96">
    <property type="method" value="X-ray"/>
    <property type="resolution" value="1.60 A"/>
    <property type="chains" value="A=2-183"/>
</dbReference>
<dbReference type="PDB" id="1LB3">
    <property type="method" value="X-ray"/>
    <property type="resolution" value="1.21 A"/>
    <property type="chains" value="A=2-183"/>
</dbReference>
<dbReference type="PDB" id="6Z3D">
    <property type="method" value="X-ray"/>
    <property type="resolution" value="1.70 A"/>
    <property type="chains" value="A/B/C/D/E/F=1-183"/>
</dbReference>
<dbReference type="PDB" id="6ZH5">
    <property type="method" value="EM"/>
    <property type="resolution" value="2.70 A"/>
    <property type="chains" value="A/B/C/D/E/F/G/H/I/J/K/L/M/N/O/P/Q/R/S/T/U/V/W/Z=1-183"/>
</dbReference>
<dbReference type="PDB" id="6ZLG">
    <property type="method" value="EM"/>
    <property type="resolution" value="3.00 A"/>
    <property type="chains" value="A/B/C/D/E/F/I/J/K/L/M/N/O/P/Q/R/S/T/U/V/W/X/Y/Z=1-183"/>
</dbReference>
<dbReference type="PDB" id="6ZLQ">
    <property type="method" value="EM"/>
    <property type="resolution" value="3.30 A"/>
    <property type="chains" value="A/B/C/D/E/F/G/H/I/J/K/L/M/N/O/P/Q/R/S/T/U/V/W/Z=1-183"/>
</dbReference>
<dbReference type="PDBsum" id="1H96"/>
<dbReference type="PDBsum" id="1LB3"/>
<dbReference type="PDBsum" id="6Z3D"/>
<dbReference type="PDBsum" id="6ZH5"/>
<dbReference type="PDBsum" id="6ZLG"/>
<dbReference type="PDBsum" id="6ZLQ"/>
<dbReference type="SMR" id="P29391"/>
<dbReference type="FunCoup" id="P29391">
    <property type="interactions" value="94"/>
</dbReference>
<dbReference type="IntAct" id="P29391">
    <property type="interactions" value="5"/>
</dbReference>
<dbReference type="MINT" id="P29391"/>
<dbReference type="STRING" id="10090.ENSMUSP00000092002"/>
<dbReference type="GlyGen" id="P29391">
    <property type="glycosylation" value="1 site, 1 O-linked glycan (1 site)"/>
</dbReference>
<dbReference type="iPTMnet" id="P29391"/>
<dbReference type="MetOSite" id="P29391"/>
<dbReference type="PhosphoSitePlus" id="P29391"/>
<dbReference type="SwissPalm" id="P29391"/>
<dbReference type="CPTAC" id="non-CPTAC-3810"/>
<dbReference type="jPOST" id="P29391"/>
<dbReference type="PaxDb" id="10090-ENSMUSP00000088372"/>
<dbReference type="PeptideAtlas" id="P29391"/>
<dbReference type="ProteomicsDB" id="267626"/>
<dbReference type="Pumba" id="P29391"/>
<dbReference type="AGR" id="MGI:95589"/>
<dbReference type="MGI" id="MGI:95589">
    <property type="gene designation" value="Ftl1"/>
</dbReference>
<dbReference type="eggNOG" id="KOG2332">
    <property type="taxonomic scope" value="Eukaryota"/>
</dbReference>
<dbReference type="InParanoid" id="P29391"/>
<dbReference type="PhylomeDB" id="P29391"/>
<dbReference type="ChiTaRS" id="Ftl1">
    <property type="organism name" value="mouse"/>
</dbReference>
<dbReference type="EvolutionaryTrace" id="P29391"/>
<dbReference type="PRO" id="PR:P29391"/>
<dbReference type="Proteomes" id="UP000000589">
    <property type="component" value="Unplaced"/>
</dbReference>
<dbReference type="RNAct" id="P29391">
    <property type="molecule type" value="protein"/>
</dbReference>
<dbReference type="GO" id="GO:0044754">
    <property type="term" value="C:autolysosome"/>
    <property type="evidence" value="ECO:0000266"/>
    <property type="project" value="MGI"/>
</dbReference>
<dbReference type="GO" id="GO:0005776">
    <property type="term" value="C:autophagosome"/>
    <property type="evidence" value="ECO:0007669"/>
    <property type="project" value="UniProtKB-SubCell"/>
</dbReference>
<dbReference type="GO" id="GO:0071682">
    <property type="term" value="C:endocytic vesicle lumen"/>
    <property type="evidence" value="ECO:0000304"/>
    <property type="project" value="Reactome"/>
</dbReference>
<dbReference type="GO" id="GO:0005576">
    <property type="term" value="C:extracellular region"/>
    <property type="evidence" value="ECO:0000304"/>
    <property type="project" value="Reactome"/>
</dbReference>
<dbReference type="GO" id="GO:0070288">
    <property type="term" value="C:ferritin complex"/>
    <property type="evidence" value="ECO:0000250"/>
    <property type="project" value="UniProtKB"/>
</dbReference>
<dbReference type="GO" id="GO:0008199">
    <property type="term" value="F:ferric iron binding"/>
    <property type="evidence" value="ECO:0007669"/>
    <property type="project" value="InterPro"/>
</dbReference>
<dbReference type="GO" id="GO:0005506">
    <property type="term" value="F:iron ion binding"/>
    <property type="evidence" value="ECO:0000250"/>
    <property type="project" value="UniProtKB"/>
</dbReference>
<dbReference type="GO" id="GO:0006879">
    <property type="term" value="P:intracellular iron ion homeostasis"/>
    <property type="evidence" value="ECO:0007669"/>
    <property type="project" value="UniProtKB-KW"/>
</dbReference>
<dbReference type="GO" id="GO:0006826">
    <property type="term" value="P:iron ion transport"/>
    <property type="evidence" value="ECO:0007669"/>
    <property type="project" value="InterPro"/>
</dbReference>
<dbReference type="CDD" id="cd00904">
    <property type="entry name" value="Ferritin"/>
    <property type="match status" value="1"/>
</dbReference>
<dbReference type="FunFam" id="1.20.1260.10:FF:000009">
    <property type="entry name" value="Ferritin light chain"/>
    <property type="match status" value="1"/>
</dbReference>
<dbReference type="Gene3D" id="1.20.1260.10">
    <property type="match status" value="1"/>
</dbReference>
<dbReference type="InterPro" id="IPR001519">
    <property type="entry name" value="Ferritin"/>
</dbReference>
<dbReference type="InterPro" id="IPR012347">
    <property type="entry name" value="Ferritin-like"/>
</dbReference>
<dbReference type="InterPro" id="IPR009040">
    <property type="entry name" value="Ferritin-like_diiron"/>
</dbReference>
<dbReference type="InterPro" id="IPR009078">
    <property type="entry name" value="Ferritin-like_SF"/>
</dbReference>
<dbReference type="InterPro" id="IPR014034">
    <property type="entry name" value="Ferritin_CS"/>
</dbReference>
<dbReference type="InterPro" id="IPR008331">
    <property type="entry name" value="Ferritin_DPS_dom"/>
</dbReference>
<dbReference type="PANTHER" id="PTHR11431">
    <property type="entry name" value="FERRITIN"/>
    <property type="match status" value="1"/>
</dbReference>
<dbReference type="PANTHER" id="PTHR11431:SF47">
    <property type="entry name" value="FERRITIN LIGHT CHAIN"/>
    <property type="match status" value="1"/>
</dbReference>
<dbReference type="Pfam" id="PF00210">
    <property type="entry name" value="Ferritin"/>
    <property type="match status" value="1"/>
</dbReference>
<dbReference type="SUPFAM" id="SSF47240">
    <property type="entry name" value="Ferritin-like"/>
    <property type="match status" value="1"/>
</dbReference>
<dbReference type="PROSITE" id="PS00540">
    <property type="entry name" value="FERRITIN_1"/>
    <property type="match status" value="1"/>
</dbReference>
<dbReference type="PROSITE" id="PS00204">
    <property type="entry name" value="FERRITIN_2"/>
    <property type="match status" value="1"/>
</dbReference>
<dbReference type="PROSITE" id="PS50905">
    <property type="entry name" value="FERRITIN_LIKE"/>
    <property type="match status" value="1"/>
</dbReference>
<comment type="function">
    <text evidence="2 3">Stores iron in a soluble, non-toxic, readily available form. Important for iron homeostasis. Iron is taken up in the ferrous form and deposited as ferric hydroxides after oxidation. Also plays a role in delivery of iron to cells. Mediates iron uptake in capsule cells of the developing kidney. Degraded to release iron upon autophagy activation by nutrient starvation (PubMed:25327288).</text>
</comment>
<comment type="subunit">
    <text evidence="3">Oligomer of 24 subunits. There are two types of subunits: L (light) chain and H (heavy) chain. The major chain can be light or heavy, depending on the species and tissue type. The functional molecule forms a roughly spherical shell with a diameter of 12 nm and contains a central cavity into which the insoluble mineral iron core is deposited. Interacts with NCOA4 (PubMed:25327288).</text>
</comment>
<comment type="subcellular location">
    <subcellularLocation>
        <location evidence="3">Cytoplasm</location>
    </subcellularLocation>
    <subcellularLocation>
        <location evidence="3">Cytoplasmic vesicle</location>
        <location evidence="3">Autophagosome</location>
    </subcellularLocation>
    <subcellularLocation>
        <location evidence="3">Autolysosome</location>
    </subcellularLocation>
</comment>
<comment type="similarity">
    <text evidence="4">Belongs to the ferritin family.</text>
</comment>
<evidence type="ECO:0000255" key="1">
    <source>
        <dbReference type="PROSITE-ProRule" id="PRU00085"/>
    </source>
</evidence>
<evidence type="ECO:0000269" key="2">
    <source>
    </source>
</evidence>
<evidence type="ECO:0000269" key="3">
    <source>
    </source>
</evidence>
<evidence type="ECO:0000305" key="4"/>
<evidence type="ECO:0007829" key="5">
    <source>
        <dbReference type="PDB" id="1LB3"/>
    </source>
</evidence>
<evidence type="ECO:0007829" key="6">
    <source>
        <dbReference type="PDB" id="6ZH5"/>
    </source>
</evidence>